<dbReference type="EMBL" id="BA000003">
    <property type="protein sequence ID" value="BAB13287.1"/>
    <property type="molecule type" value="Genomic_DNA"/>
</dbReference>
<dbReference type="RefSeq" id="NP_240401.1">
    <property type="nucleotide sequence ID" value="NC_002528.1"/>
</dbReference>
<dbReference type="RefSeq" id="WP_009874550.1">
    <property type="nucleotide sequence ID" value="NZ_AP036055.1"/>
</dbReference>
<dbReference type="SMR" id="P57658"/>
<dbReference type="STRING" id="563178.BUAP5A_595"/>
<dbReference type="EnsemblBacteria" id="BAB13287">
    <property type="protein sequence ID" value="BAB13287"/>
    <property type="gene ID" value="BAB13287"/>
</dbReference>
<dbReference type="KEGG" id="buc:BU603"/>
<dbReference type="PATRIC" id="fig|107806.10.peg.605"/>
<dbReference type="eggNOG" id="COG0822">
    <property type="taxonomic scope" value="Bacteria"/>
</dbReference>
<dbReference type="HOGENOM" id="CLU_079283_5_0_6"/>
<dbReference type="Proteomes" id="UP000001806">
    <property type="component" value="Chromosome"/>
</dbReference>
<dbReference type="GO" id="GO:0005737">
    <property type="term" value="C:cytoplasm"/>
    <property type="evidence" value="ECO:0007669"/>
    <property type="project" value="UniProtKB-ARBA"/>
</dbReference>
<dbReference type="GO" id="GO:0005506">
    <property type="term" value="F:iron ion binding"/>
    <property type="evidence" value="ECO:0007669"/>
    <property type="project" value="InterPro"/>
</dbReference>
<dbReference type="GO" id="GO:0051536">
    <property type="term" value="F:iron-sulfur cluster binding"/>
    <property type="evidence" value="ECO:0007669"/>
    <property type="project" value="InterPro"/>
</dbReference>
<dbReference type="GO" id="GO:0016226">
    <property type="term" value="P:iron-sulfur cluster assembly"/>
    <property type="evidence" value="ECO:0007669"/>
    <property type="project" value="InterPro"/>
</dbReference>
<dbReference type="CDD" id="cd06664">
    <property type="entry name" value="IscU_like"/>
    <property type="match status" value="1"/>
</dbReference>
<dbReference type="FunFam" id="3.90.1010.10:FF:000001">
    <property type="entry name" value="Iron-sulfur cluster assembly scaffold protein IscU"/>
    <property type="match status" value="1"/>
</dbReference>
<dbReference type="Gene3D" id="3.90.1010.10">
    <property type="match status" value="1"/>
</dbReference>
<dbReference type="InterPro" id="IPR011339">
    <property type="entry name" value="ISCU"/>
</dbReference>
<dbReference type="InterPro" id="IPR002871">
    <property type="entry name" value="NIF_FeS_clus_asmbl_NifU_N"/>
</dbReference>
<dbReference type="NCBIfam" id="TIGR01999">
    <property type="entry name" value="iscU"/>
    <property type="match status" value="1"/>
</dbReference>
<dbReference type="PANTHER" id="PTHR10093">
    <property type="entry name" value="IRON-SULFUR CLUSTER ASSEMBLY ENZYME NIFU HOMOLOG"/>
    <property type="match status" value="1"/>
</dbReference>
<dbReference type="Pfam" id="PF01592">
    <property type="entry name" value="NifU_N"/>
    <property type="match status" value="1"/>
</dbReference>
<dbReference type="SUPFAM" id="SSF82649">
    <property type="entry name" value="SufE/NifU"/>
    <property type="match status" value="1"/>
</dbReference>
<reference key="1">
    <citation type="journal article" date="2000" name="Nature">
        <title>Genome sequence of the endocellular bacterial symbiont of aphids Buchnera sp. APS.</title>
        <authorList>
            <person name="Shigenobu S."/>
            <person name="Watanabe H."/>
            <person name="Hattori M."/>
            <person name="Sakaki Y."/>
            <person name="Ishikawa H."/>
        </authorList>
    </citation>
    <scope>NUCLEOTIDE SEQUENCE [LARGE SCALE GENOMIC DNA]</scope>
    <source>
        <strain>APS</strain>
    </source>
</reference>
<accession>P57658</accession>
<organism>
    <name type="scientific">Buchnera aphidicola subsp. Acyrthosiphon pisum (strain APS)</name>
    <name type="common">Acyrthosiphon pisum symbiotic bacterium</name>
    <dbReference type="NCBI Taxonomy" id="107806"/>
    <lineage>
        <taxon>Bacteria</taxon>
        <taxon>Pseudomonadati</taxon>
        <taxon>Pseudomonadota</taxon>
        <taxon>Gammaproteobacteria</taxon>
        <taxon>Enterobacterales</taxon>
        <taxon>Erwiniaceae</taxon>
        <taxon>Buchnera</taxon>
    </lineage>
</organism>
<gene>
    <name type="primary">iscU</name>
    <name type="synonym">nifU</name>
    <name type="ordered locus">BU603</name>
</gene>
<evidence type="ECO:0000250" key="1"/>
<evidence type="ECO:0000305" key="2"/>
<feature type="chain" id="PRO_0000166181" description="Iron-sulfur cluster assembly scaffold protein IscU">
    <location>
        <begin position="1"/>
        <end position="127"/>
    </location>
</feature>
<keyword id="KW-1185">Reference proteome</keyword>
<name>ISCU_BUCAI</name>
<sequence>MAYSKKVMDHYENPRNVGSFSSTDLNVGSGLVGAPACGDVMKLQIKVNEKGIIEDACFKTYGCGSAIASSSLVTEWVKGKSIEEAESIKNTTIVEELDLPPVKIHCSILAEDAIKAAISDYKRKKIN</sequence>
<protein>
    <recommendedName>
        <fullName>Iron-sulfur cluster assembly scaffold protein IscU</fullName>
    </recommendedName>
    <alternativeName>
        <fullName>Sulfur acceptor protein IscU</fullName>
    </alternativeName>
</protein>
<proteinExistence type="inferred from homology"/>
<comment type="function">
    <text evidence="1">A scaffold on which IscS assembles Fe-S clusters. Subsequently gives the nascent cluster to other proteins. It is likely that Fe-S cluster coordination is flexible as the role of this complex is to build and then hand off Fe-S clusters (By similarity).</text>
</comment>
<comment type="subunit">
    <text evidence="1">Forms a heterotetramer with IscS; each subunit of the IscS dimer contacts an IscU monomer.</text>
</comment>
<comment type="similarity">
    <text evidence="2">Belongs to the NifU family.</text>
</comment>